<keyword id="KW-0009">Actin-binding</keyword>
<keyword id="KW-0020">Allergen</keyword>
<keyword id="KW-0963">Cytoplasm</keyword>
<keyword id="KW-0206">Cytoskeleton</keyword>
<keyword id="KW-1015">Disulfide bond</keyword>
<keyword id="KW-0597">Phosphoprotein</keyword>
<sequence>MSWQTYVDEHLMCEIEGHHLASAAILGHDGTVWAQSADFPQFKPEEITGIMKDFDEPGHLAPTGMFVATAKYMVIQGEPGAVIRGKKGAGGITIKKTGQALVVGIYDEPMTPGQCNMVVERLGDYLLKQGL</sequence>
<proteinExistence type="evidence at protein level"/>
<dbReference type="EMBL" id="DQ663538">
    <property type="protein sequence ID" value="ABG81291.1"/>
    <property type="molecule type" value="mRNA"/>
</dbReference>
<dbReference type="SMR" id="A4KA34"/>
<dbReference type="Allergome" id="553">
    <property type="allergen name" value="Phl p 12"/>
</dbReference>
<dbReference type="GO" id="GO:0005938">
    <property type="term" value="C:cell cortex"/>
    <property type="evidence" value="ECO:0007669"/>
    <property type="project" value="TreeGrafter"/>
</dbReference>
<dbReference type="GO" id="GO:0005856">
    <property type="term" value="C:cytoskeleton"/>
    <property type="evidence" value="ECO:0007669"/>
    <property type="project" value="UniProtKB-SubCell"/>
</dbReference>
<dbReference type="GO" id="GO:0003785">
    <property type="term" value="F:actin monomer binding"/>
    <property type="evidence" value="ECO:0007669"/>
    <property type="project" value="TreeGrafter"/>
</dbReference>
<dbReference type="CDD" id="cd00148">
    <property type="entry name" value="PROF"/>
    <property type="match status" value="1"/>
</dbReference>
<dbReference type="FunFam" id="3.30.450.30:FF:000001">
    <property type="entry name" value="Profilin"/>
    <property type="match status" value="1"/>
</dbReference>
<dbReference type="Gene3D" id="3.30.450.30">
    <property type="entry name" value="Dynein light chain 2a, cytoplasmic"/>
    <property type="match status" value="1"/>
</dbReference>
<dbReference type="InterPro" id="IPR048278">
    <property type="entry name" value="PFN"/>
</dbReference>
<dbReference type="InterPro" id="IPR005455">
    <property type="entry name" value="PFN_euk"/>
</dbReference>
<dbReference type="InterPro" id="IPR036140">
    <property type="entry name" value="PFN_sf"/>
</dbReference>
<dbReference type="InterPro" id="IPR027310">
    <property type="entry name" value="Profilin_CS"/>
</dbReference>
<dbReference type="PANTHER" id="PTHR11604">
    <property type="entry name" value="PROFILIN"/>
    <property type="match status" value="1"/>
</dbReference>
<dbReference type="PANTHER" id="PTHR11604:SF31">
    <property type="entry name" value="PROFILIN"/>
    <property type="match status" value="1"/>
</dbReference>
<dbReference type="Pfam" id="PF00235">
    <property type="entry name" value="Profilin"/>
    <property type="match status" value="1"/>
</dbReference>
<dbReference type="PRINTS" id="PR00392">
    <property type="entry name" value="PROFILIN"/>
</dbReference>
<dbReference type="PRINTS" id="PR01640">
    <property type="entry name" value="PROFILINPLNT"/>
</dbReference>
<dbReference type="SMART" id="SM00392">
    <property type="entry name" value="PROF"/>
    <property type="match status" value="1"/>
</dbReference>
<dbReference type="SUPFAM" id="SSF55770">
    <property type="entry name" value="Profilin (actin-binding protein)"/>
    <property type="match status" value="1"/>
</dbReference>
<dbReference type="PROSITE" id="PS00414">
    <property type="entry name" value="PROFILIN"/>
    <property type="match status" value="1"/>
</dbReference>
<reference key="1">
    <citation type="journal article" date="2012" name="PLoS ONE">
        <title>Characterization of profilin polymorphism in pollen with a focus on multifunctionality.</title>
        <authorList>
            <person name="Jimenez-Lopez J.C."/>
            <person name="Morales S."/>
            <person name="Castro A.J."/>
            <person name="Volkmann D."/>
            <person name="Rodriguez-Garcia M.I."/>
            <person name="Alche Jde D."/>
        </authorList>
    </citation>
    <scope>NUCLEOTIDE SEQUENCE [MRNA]</scope>
    <scope>POLYMORPHISM</scope>
    <source>
        <strain>cv. Pratense</strain>
    </source>
</reference>
<reference key="2">
    <citation type="journal article" date="2013" name="PLoS ONE">
        <title>Analysis of the effects of polymorphism on pollen profilin structural functionality and the generation of conformational, T- and B-cell epitopes.</title>
        <authorList>
            <person name="Jimenez-Lopez J.C."/>
            <person name="Rodriguez-Garcia M.I."/>
            <person name="Alche J.D."/>
        </authorList>
    </citation>
    <scope>3D-STRUCTURE MODELING</scope>
    <scope>DISULFIDE BOND</scope>
</reference>
<comment type="function">
    <text evidence="1">Binds to actin and affects the structure of the cytoskeleton. At high concentrations, profilin prevents the polymerization of actin, whereas it enhances it at low concentrations (By similarity).</text>
</comment>
<comment type="subunit">
    <text evidence="1">Occurs in many kinds of cells as a complex with monomeric actin in a 1:1 ratio.</text>
</comment>
<comment type="subcellular location">
    <subcellularLocation>
        <location evidence="1">Cytoplasm</location>
        <location evidence="1">Cytoskeleton</location>
    </subcellularLocation>
</comment>
<comment type="PTM">
    <text evidence="1">Phosphorylated by MAP kinases.</text>
</comment>
<comment type="polymorphism">
    <text>Several isoforms of the allergen exist due to polymorphism.</text>
</comment>
<comment type="allergen">
    <text>Causes an allergic reaction in human.</text>
</comment>
<comment type="miscellaneous">
    <text evidence="3">The variability of the residues taking part of IgE-binding epitopes might be responsible of the difference in cross-reactivity among olive pollen cultivars, and between distantly related pollen species, leading to a variable range of allergy reactions among atopic patients.</text>
</comment>
<comment type="similarity">
    <text evidence="2">Belongs to the profilin family.</text>
</comment>
<feature type="initiator methionine" description="Removed" evidence="1">
    <location>
        <position position="1"/>
    </location>
</feature>
<feature type="chain" id="PRO_0000425061" description="Profilin-7">
    <location>
        <begin position="2"/>
        <end position="131"/>
    </location>
</feature>
<feature type="short sequence motif" description="Involved in PIP2 interaction">
    <location>
        <begin position="81"/>
        <end position="97"/>
    </location>
</feature>
<feature type="modified residue" description="Phosphothreonine" evidence="1">
    <location>
        <position position="111"/>
    </location>
</feature>
<feature type="disulfide bond" evidence="3">
    <location>
        <begin position="13"/>
        <end position="115"/>
    </location>
</feature>
<protein>
    <recommendedName>
        <fullName>Profilin-7</fullName>
    </recommendedName>
    <alternativeName>
        <fullName>Pollen allergen Phl p 12</fullName>
    </alternativeName>
    <alternativeName>
        <fullName>pollen profilin variant 4</fullName>
    </alternativeName>
    <allergenName>Phl p 12</allergenName>
</protein>
<evidence type="ECO:0000250" key="1"/>
<evidence type="ECO:0000305" key="2"/>
<evidence type="ECO:0000305" key="3">
    <source>
    </source>
</evidence>
<accession>A4KA34</accession>
<name>PROF7_PHLPR</name>
<organism>
    <name type="scientific">Phleum pratense</name>
    <name type="common">Common timothy</name>
    <dbReference type="NCBI Taxonomy" id="15957"/>
    <lineage>
        <taxon>Eukaryota</taxon>
        <taxon>Viridiplantae</taxon>
        <taxon>Streptophyta</taxon>
        <taxon>Embryophyta</taxon>
        <taxon>Tracheophyta</taxon>
        <taxon>Spermatophyta</taxon>
        <taxon>Magnoliopsida</taxon>
        <taxon>Liliopsida</taxon>
        <taxon>Poales</taxon>
        <taxon>Poaceae</taxon>
        <taxon>BOP clade</taxon>
        <taxon>Pooideae</taxon>
        <taxon>Poodae</taxon>
        <taxon>Poeae</taxon>
        <taxon>Poeae Chloroplast Group 2 (Poeae type)</taxon>
        <taxon>Poodinae</taxon>
        <taxon>Phleinae</taxon>
        <taxon>Phleum</taxon>
    </lineage>
</organism>